<evidence type="ECO:0000250" key="1"/>
<evidence type="ECO:0000255" key="2">
    <source>
        <dbReference type="PROSITE-ProRule" id="PRU00127"/>
    </source>
</evidence>
<evidence type="ECO:0000256" key="3">
    <source>
        <dbReference type="SAM" id="MobiDB-lite"/>
    </source>
</evidence>
<evidence type="ECO:0000269" key="4">
    <source>
    </source>
</evidence>
<protein>
    <recommendedName>
        <fullName>Necdin</fullName>
    </recommendedName>
</protein>
<dbReference type="EMBL" id="U35139">
    <property type="protein sequence ID" value="AAB39469.1"/>
    <property type="molecule type" value="mRNA"/>
</dbReference>
<dbReference type="EMBL" id="AB007828">
    <property type="protein sequence ID" value="BAA22660.1"/>
    <property type="molecule type" value="Genomic_DNA"/>
</dbReference>
<dbReference type="EMBL" id="AK312779">
    <property type="protein sequence ID" value="BAG35642.1"/>
    <property type="molecule type" value="mRNA"/>
</dbReference>
<dbReference type="EMBL" id="BC008750">
    <property type="protein sequence ID" value="AAH08750.1"/>
    <property type="molecule type" value="mRNA"/>
</dbReference>
<dbReference type="CCDS" id="CCDS10014.1"/>
<dbReference type="RefSeq" id="NP_002478.1">
    <property type="nucleotide sequence ID" value="NM_002487.3"/>
</dbReference>
<dbReference type="SMR" id="Q99608"/>
<dbReference type="BioGRID" id="110772">
    <property type="interactions" value="386"/>
</dbReference>
<dbReference type="FunCoup" id="Q99608">
    <property type="interactions" value="515"/>
</dbReference>
<dbReference type="IntAct" id="Q99608">
    <property type="interactions" value="272"/>
</dbReference>
<dbReference type="MINT" id="Q99608"/>
<dbReference type="STRING" id="9606.ENSP00000497916"/>
<dbReference type="GlyGen" id="Q99608">
    <property type="glycosylation" value="1 site"/>
</dbReference>
<dbReference type="iPTMnet" id="Q99608"/>
<dbReference type="PhosphoSitePlus" id="Q99608"/>
<dbReference type="BioMuta" id="NDN"/>
<dbReference type="DMDM" id="17380142"/>
<dbReference type="MassIVE" id="Q99608"/>
<dbReference type="PaxDb" id="9606-ENSP00000332643"/>
<dbReference type="PeptideAtlas" id="Q99608"/>
<dbReference type="ProteomicsDB" id="78353"/>
<dbReference type="Pumba" id="Q99608"/>
<dbReference type="Antibodypedia" id="22276">
    <property type="antibodies" value="367 antibodies from 26 providers"/>
</dbReference>
<dbReference type="DNASU" id="4692"/>
<dbReference type="Ensembl" id="ENST00000649030.2">
    <property type="protein sequence ID" value="ENSP00000497916.1"/>
    <property type="gene ID" value="ENSG00000182636.8"/>
</dbReference>
<dbReference type="GeneID" id="4692"/>
<dbReference type="KEGG" id="hsa:4692"/>
<dbReference type="MANE-Select" id="ENST00000649030.2">
    <property type="protein sequence ID" value="ENSP00000497916.1"/>
    <property type="RefSeq nucleotide sequence ID" value="NM_002487.3"/>
    <property type="RefSeq protein sequence ID" value="NP_002478.1"/>
</dbReference>
<dbReference type="AGR" id="HGNC:7675"/>
<dbReference type="CTD" id="4692"/>
<dbReference type="DisGeNET" id="4692"/>
<dbReference type="GeneCards" id="NDN"/>
<dbReference type="GeneReviews" id="NDN"/>
<dbReference type="HGNC" id="HGNC:7675">
    <property type="gene designation" value="NDN"/>
</dbReference>
<dbReference type="HPA" id="ENSG00000182636">
    <property type="expression patterns" value="Low tissue specificity"/>
</dbReference>
<dbReference type="MalaCards" id="NDN"/>
<dbReference type="MIM" id="176270">
    <property type="type" value="phenotype"/>
</dbReference>
<dbReference type="MIM" id="602117">
    <property type="type" value="gene"/>
</dbReference>
<dbReference type="neXtProt" id="NX_Q99608"/>
<dbReference type="OpenTargets" id="ENSG00000182636"/>
<dbReference type="Orphanet" id="177910">
    <property type="disease" value="Prader-Willi syndrome due to imprinting mutation"/>
</dbReference>
<dbReference type="Orphanet" id="98754">
    <property type="disease" value="Prader-Willi syndrome due to maternal uniparental disomy of chromosome 15"/>
</dbReference>
<dbReference type="Orphanet" id="177901">
    <property type="disease" value="Prader-Willi syndrome due to paternal deletion of 15q11q13 type 1"/>
</dbReference>
<dbReference type="Orphanet" id="177904">
    <property type="disease" value="Prader-Willi syndrome due to paternal deletion of 15q11q13 type 2"/>
</dbReference>
<dbReference type="PharmGKB" id="PA31479"/>
<dbReference type="VEuPathDB" id="HostDB:ENSG00000182636"/>
<dbReference type="eggNOG" id="KOG4562">
    <property type="taxonomic scope" value="Eukaryota"/>
</dbReference>
<dbReference type="GeneTree" id="ENSGT00940000163084"/>
<dbReference type="HOGENOM" id="CLU_039582_1_1_1"/>
<dbReference type="InParanoid" id="Q99608"/>
<dbReference type="OMA" id="NPTAHCP"/>
<dbReference type="OrthoDB" id="205198at2759"/>
<dbReference type="PAN-GO" id="Q99608">
    <property type="GO annotations" value="2 GO annotations based on evolutionary models"/>
</dbReference>
<dbReference type="PhylomeDB" id="Q99608"/>
<dbReference type="TreeFam" id="TF328505"/>
<dbReference type="PathwayCommons" id="Q99608"/>
<dbReference type="Reactome" id="R-HSA-6785807">
    <property type="pathway name" value="Interleukin-4 and Interleukin-13 signaling"/>
</dbReference>
<dbReference type="SignaLink" id="Q99608"/>
<dbReference type="SIGNOR" id="Q99608"/>
<dbReference type="BioGRID-ORCS" id="4692">
    <property type="hits" value="12 hits in 1158 CRISPR screens"/>
</dbReference>
<dbReference type="ChiTaRS" id="NDN">
    <property type="organism name" value="human"/>
</dbReference>
<dbReference type="GeneWiki" id="NDN_(gene)"/>
<dbReference type="GenomeRNAi" id="4692"/>
<dbReference type="Pharos" id="Q99608">
    <property type="development level" value="Tbio"/>
</dbReference>
<dbReference type="PRO" id="PR:Q99608"/>
<dbReference type="Proteomes" id="UP000005640">
    <property type="component" value="Chromosome 15"/>
</dbReference>
<dbReference type="RNAct" id="Q99608">
    <property type="molecule type" value="protein"/>
</dbReference>
<dbReference type="Bgee" id="ENSG00000182636">
    <property type="expression patterns" value="Expressed in endothelial cell and 201 other cell types or tissues"/>
</dbReference>
<dbReference type="ExpressionAtlas" id="Q99608">
    <property type="expression patterns" value="baseline and differential"/>
</dbReference>
<dbReference type="GO" id="GO:0042995">
    <property type="term" value="C:cell projection"/>
    <property type="evidence" value="ECO:0007669"/>
    <property type="project" value="Ensembl"/>
</dbReference>
<dbReference type="GO" id="GO:0005813">
    <property type="term" value="C:centrosome"/>
    <property type="evidence" value="ECO:0007669"/>
    <property type="project" value="Ensembl"/>
</dbReference>
<dbReference type="GO" id="GO:0005829">
    <property type="term" value="C:cytosol"/>
    <property type="evidence" value="ECO:0000314"/>
    <property type="project" value="HPA"/>
</dbReference>
<dbReference type="GO" id="GO:0005654">
    <property type="term" value="C:nucleoplasm"/>
    <property type="evidence" value="ECO:0000314"/>
    <property type="project" value="HPA"/>
</dbReference>
<dbReference type="GO" id="GO:0005634">
    <property type="term" value="C:nucleus"/>
    <property type="evidence" value="ECO:0000318"/>
    <property type="project" value="GO_Central"/>
</dbReference>
<dbReference type="GO" id="GO:0043204">
    <property type="term" value="C:perikaryon"/>
    <property type="evidence" value="ECO:0007669"/>
    <property type="project" value="UniProtKB-SubCell"/>
</dbReference>
<dbReference type="GO" id="GO:0032991">
    <property type="term" value="C:protein-containing complex"/>
    <property type="evidence" value="ECO:0007669"/>
    <property type="project" value="Ensembl"/>
</dbReference>
<dbReference type="GO" id="GO:0003677">
    <property type="term" value="F:DNA binding"/>
    <property type="evidence" value="ECO:0007669"/>
    <property type="project" value="UniProtKB-KW"/>
</dbReference>
<dbReference type="GO" id="GO:0043015">
    <property type="term" value="F:gamma-tubulin binding"/>
    <property type="evidence" value="ECO:0007669"/>
    <property type="project" value="Ensembl"/>
</dbReference>
<dbReference type="GO" id="GO:1990841">
    <property type="term" value="F:promoter-specific chromatin binding"/>
    <property type="evidence" value="ECO:0007669"/>
    <property type="project" value="Ensembl"/>
</dbReference>
<dbReference type="GO" id="GO:0048675">
    <property type="term" value="P:axon extension"/>
    <property type="evidence" value="ECO:0007669"/>
    <property type="project" value="Ensembl"/>
</dbReference>
<dbReference type="GO" id="GO:0007413">
    <property type="term" value="P:axonal fasciculation"/>
    <property type="evidence" value="ECO:0007669"/>
    <property type="project" value="Ensembl"/>
</dbReference>
<dbReference type="GO" id="GO:0007417">
    <property type="term" value="P:central nervous system development"/>
    <property type="evidence" value="ECO:0007669"/>
    <property type="project" value="Ensembl"/>
</dbReference>
<dbReference type="GO" id="GO:0071514">
    <property type="term" value="P:genomic imprinting"/>
    <property type="evidence" value="ECO:0007669"/>
    <property type="project" value="Ensembl"/>
</dbReference>
<dbReference type="GO" id="GO:0008347">
    <property type="term" value="P:glial cell migration"/>
    <property type="evidence" value="ECO:0007669"/>
    <property type="project" value="Ensembl"/>
</dbReference>
<dbReference type="GO" id="GO:0048871">
    <property type="term" value="P:multicellular organismal-level homeostasis"/>
    <property type="evidence" value="ECO:0007669"/>
    <property type="project" value="Ensembl"/>
</dbReference>
<dbReference type="GO" id="GO:0000122">
    <property type="term" value="P:negative regulation of transcription by RNA polymerase II"/>
    <property type="evidence" value="ECO:0000318"/>
    <property type="project" value="GO_Central"/>
</dbReference>
<dbReference type="GO" id="GO:0001764">
    <property type="term" value="P:neuron migration"/>
    <property type="evidence" value="ECO:0007669"/>
    <property type="project" value="Ensembl"/>
</dbReference>
<dbReference type="GO" id="GO:0048011">
    <property type="term" value="P:neurotrophin TRK receptor signaling pathway"/>
    <property type="evidence" value="ECO:0007669"/>
    <property type="project" value="Ensembl"/>
</dbReference>
<dbReference type="GO" id="GO:0045944">
    <property type="term" value="P:positive regulation of transcription by RNA polymerase II"/>
    <property type="evidence" value="ECO:0007669"/>
    <property type="project" value="Ensembl"/>
</dbReference>
<dbReference type="GO" id="GO:0009791">
    <property type="term" value="P:post-embryonic development"/>
    <property type="evidence" value="ECO:0007669"/>
    <property type="project" value="Ensembl"/>
</dbReference>
<dbReference type="GO" id="GO:0003016">
    <property type="term" value="P:respiratory system process"/>
    <property type="evidence" value="ECO:0007669"/>
    <property type="project" value="Ensembl"/>
</dbReference>
<dbReference type="GO" id="GO:0019233">
    <property type="term" value="P:sensory perception of pain"/>
    <property type="evidence" value="ECO:0007669"/>
    <property type="project" value="Ensembl"/>
</dbReference>
<dbReference type="FunFam" id="1.10.10.1210:FF:000001">
    <property type="entry name" value="melanoma-associated antigen D1"/>
    <property type="match status" value="1"/>
</dbReference>
<dbReference type="FunFam" id="1.10.10.1200:FF:000005">
    <property type="entry name" value="Necdin homolog (Mouse)"/>
    <property type="match status" value="1"/>
</dbReference>
<dbReference type="Gene3D" id="1.10.10.1200">
    <property type="entry name" value="MAGE homology domain, winged helix WH1 motif"/>
    <property type="match status" value="1"/>
</dbReference>
<dbReference type="Gene3D" id="1.10.10.1210">
    <property type="entry name" value="MAGE homology domain, winged helix WH2 motif"/>
    <property type="match status" value="1"/>
</dbReference>
<dbReference type="InterPro" id="IPR037445">
    <property type="entry name" value="MAGE"/>
</dbReference>
<dbReference type="InterPro" id="IPR041898">
    <property type="entry name" value="MAGE_WH1"/>
</dbReference>
<dbReference type="InterPro" id="IPR041899">
    <property type="entry name" value="MAGE_WH2"/>
</dbReference>
<dbReference type="InterPro" id="IPR002190">
    <property type="entry name" value="MHD_dom"/>
</dbReference>
<dbReference type="PANTHER" id="PTHR11736">
    <property type="entry name" value="MELANOMA-ASSOCIATED ANTIGEN MAGE ANTIGEN"/>
    <property type="match status" value="1"/>
</dbReference>
<dbReference type="PANTHER" id="PTHR11736:SF10">
    <property type="entry name" value="NECDIN"/>
    <property type="match status" value="1"/>
</dbReference>
<dbReference type="Pfam" id="PF01454">
    <property type="entry name" value="MAGE"/>
    <property type="match status" value="1"/>
</dbReference>
<dbReference type="SMART" id="SM01373">
    <property type="entry name" value="MAGE"/>
    <property type="match status" value="1"/>
</dbReference>
<dbReference type="PROSITE" id="PS50838">
    <property type="entry name" value="MAGE"/>
    <property type="match status" value="1"/>
</dbReference>
<sequence length="321" mass="36086">MSEQSKDLSDPNFAAEAPNSEVHSSPGVSEGVPPSATLAEPQSPPLGPTAAPQAAPPPQAPNDEGDPKALQQAAEEGRAHQAPSAAQPGPAPPAPAQLVQKAHELMWYVLVKDQKKMIIWFPDMVKDVIGSYKKWCRSILRRTSLILARVFGLHLRLTSLHTMEFALVKALEPEELDRVALSNRMPMTGLLLMILSLIYVKGRGARESAVWNVLRILGLRPWKKHSTFGDVRKLITEEFVQMNYLKYQRVPYVEPPEYEFFWGSRASREITKMQIMEFLARVFKKDPQAWPSRYREALEEARALREANPTAHYPRSSVSED</sequence>
<proteinExistence type="evidence at protein level"/>
<name>NECD_HUMAN</name>
<organism>
    <name type="scientific">Homo sapiens</name>
    <name type="common">Human</name>
    <dbReference type="NCBI Taxonomy" id="9606"/>
    <lineage>
        <taxon>Eukaryota</taxon>
        <taxon>Metazoa</taxon>
        <taxon>Chordata</taxon>
        <taxon>Craniata</taxon>
        <taxon>Vertebrata</taxon>
        <taxon>Euteleostomi</taxon>
        <taxon>Mammalia</taxon>
        <taxon>Eutheria</taxon>
        <taxon>Euarchontoglires</taxon>
        <taxon>Primates</taxon>
        <taxon>Haplorrhini</taxon>
        <taxon>Catarrhini</taxon>
        <taxon>Hominidae</taxon>
        <taxon>Homo</taxon>
    </lineage>
</organism>
<keyword id="KW-0238">DNA-binding</keyword>
<keyword id="KW-0341">Growth regulation</keyword>
<keyword id="KW-0539">Nucleus</keyword>
<keyword id="KW-1267">Proteomics identification</keyword>
<keyword id="KW-1185">Reference proteome</keyword>
<keyword id="KW-0804">Transcription</keyword>
<keyword id="KW-0805">Transcription regulation</keyword>
<comment type="function">
    <text evidence="1">Growth suppressor that facilitates the entry of the cell into cell cycle arrest. Functionally similar to the retinoblastoma protein it binds to and represses the activity of cell-cycle-promoting proteins such as SV40 large T antigen, adenovirus E1A, and the transcription factor E2F. Necdin also interacts with p53 and works in an additive manner to inhibit cell growth. Also functions as a transcription factor and directly binds to specific guanosine-rich DNA sequences (By similarity).</text>
</comment>
<comment type="subunit">
    <text evidence="1">Binds to the transactivation domains of E2F1 and p53. Binds also SV40 large T antigen and adenovirus E1A. Interacts with nucleobindin 1 and 2 (By similarity).</text>
</comment>
<comment type="interaction">
    <interactant intactId="EBI-718177">
        <id>Q99608</id>
    </interactant>
    <interactant intactId="EBI-1049975">
        <id>Q9Y6B2</id>
        <label>EID1</label>
    </interactant>
    <organismsDiffer>false</organismsDiffer>
    <experiments>3</experiments>
</comment>
<comment type="interaction">
    <interactant intactId="EBI-718177">
        <id>Q99608</id>
    </interactant>
    <interactant intactId="EBI-747754">
        <id>P28799</id>
        <label>GRN</label>
    </interactant>
    <organismsDiffer>false</organismsDiffer>
    <experiments>3</experiments>
</comment>
<comment type="interaction">
    <interactant intactId="EBI-718177">
        <id>Q99608</id>
    </interactant>
    <interactant intactId="EBI-352682">
        <id>P04792</id>
        <label>HSPB1</label>
    </interactant>
    <organismsDiffer>false</organismsDiffer>
    <experiments>3</experiments>
</comment>
<comment type="interaction">
    <interactant intactId="EBI-718177">
        <id>Q99608</id>
    </interactant>
    <interactant intactId="EBI-466029">
        <id>P42858</id>
        <label>HTT</label>
    </interactant>
    <organismsDiffer>false</organismsDiffer>
    <experiments>6</experiments>
</comment>
<comment type="interaction">
    <interactant intactId="EBI-718177">
        <id>Q99608</id>
    </interactant>
    <interactant intactId="EBI-10178578">
        <id>I6L9F6</id>
        <label>NEFL</label>
    </interactant>
    <organismsDiffer>false</organismsDiffer>
    <experiments>3</experiments>
</comment>
<comment type="interaction">
    <interactant intactId="EBI-718177">
        <id>Q99608</id>
    </interactant>
    <interactant intactId="EBI-475646">
        <id>P07196</id>
        <label>NEFL</label>
    </interactant>
    <organismsDiffer>false</organismsDiffer>
    <experiments>4</experiments>
</comment>
<comment type="interaction">
    <interactant intactId="EBI-718177">
        <id>Q99608</id>
    </interactant>
    <interactant intactId="EBI-2957445">
        <id>Q9BPZ3</id>
        <label>PAIP2</label>
    </interactant>
    <organismsDiffer>false</organismsDiffer>
    <experiments>6</experiments>
</comment>
<comment type="interaction">
    <interactant intactId="EBI-718177">
        <id>Q99608</id>
    </interactant>
    <interactant intactId="EBI-10770179">
        <id>Q96A49</id>
        <label>SYAP1</label>
    </interactant>
    <organismsDiffer>false</organismsDiffer>
    <experiments>6</experiments>
</comment>
<comment type="interaction">
    <interactant intactId="EBI-718177">
        <id>Q99608</id>
    </interactant>
    <interactant intactId="EBI-366083">
        <id>P04637</id>
        <label>TP53</label>
    </interactant>
    <organismsDiffer>false</organismsDiffer>
    <experiments>4</experiments>
</comment>
<comment type="interaction">
    <interactant intactId="EBI-718177">
        <id>Q99608</id>
    </interactant>
    <interactant intactId="EBI-720609">
        <id>O76024</id>
        <label>WFS1</label>
    </interactant>
    <organismsDiffer>false</organismsDiffer>
    <experiments>3</experiments>
</comment>
<comment type="subcellular location">
    <subcellularLocation>
        <location>Perikaryon</location>
    </subcellularLocation>
    <subcellularLocation>
        <location>Nucleus</location>
    </subcellularLocation>
    <text>Neural perikarya, translocates to the nucleus of postmitotic neurons and interacts with the nuclear matrix.</text>
</comment>
<comment type="tissue specificity">
    <text>Almost ubiquitous. Detected in fetal brain, lung, liver and kidney; in adult heart, brain, placenta, lung, liver, skeletal muscle, kidney, pancreas, spleen, thymus, prostate, testis, ovary, small intestine and colon. Not detected in peripheral blood leukocytes. In brain, restricted to post-mitotic neurons.</text>
</comment>
<comment type="miscellaneous">
    <text>Located in the Prader-Willi syndrome (PWS) chromosome region. Prader-Willi syndrome is a contiguous gene syndrome resulting from deletion of the paternal copies of the imprinted SNRPN gene, the necdin gene, and possibly other genes within the chromosome region 15q11-q13.</text>
</comment>
<accession>Q99608</accession>
<accession>B2R6Z5</accession>
<gene>
    <name type="primary">NDN</name>
</gene>
<reference key="1">
    <citation type="journal article" date="1997" name="Nat. Genet.">
        <title>The human necdin gene, NDN, is maternally imprinted and located in the Prader-Willi syndrome chromosomal region.</title>
        <authorList>
            <person name="Jay P."/>
            <person name="Rougeulle C."/>
            <person name="Massacrier A."/>
            <person name="Moncla A."/>
            <person name="Mattei M.-G."/>
            <person name="Malzac P."/>
            <person name="Roeckel N."/>
            <person name="Taviaux S."/>
            <person name="Lefranc J.-L.B."/>
            <person name="Cau P."/>
            <person name="Berta P."/>
            <person name="Lalande M."/>
            <person name="Muscatelli F."/>
        </authorList>
    </citation>
    <scope>NUCLEOTIDE SEQUENCE [MRNA]</scope>
    <source>
        <tissue>Embryo</tissue>
    </source>
</reference>
<reference key="2">
    <citation type="journal article" date="1998" name="Gene">
        <title>The human chromosomal gene for necdin, a neuronal growth suppressor, in the Prader-Willi syndrome deletion region.</title>
        <authorList>
            <person name="Nakada Y."/>
            <person name="Taniura H."/>
            <person name="Uetsuki T."/>
            <person name="Inazawa J."/>
            <person name="Yoshikawa K."/>
        </authorList>
    </citation>
    <scope>NUCLEOTIDE SEQUENCE [GENOMIC DNA]</scope>
</reference>
<reference key="3">
    <citation type="journal article" date="2004" name="Nat. Genet.">
        <title>Complete sequencing and characterization of 21,243 full-length human cDNAs.</title>
        <authorList>
            <person name="Ota T."/>
            <person name="Suzuki Y."/>
            <person name="Nishikawa T."/>
            <person name="Otsuki T."/>
            <person name="Sugiyama T."/>
            <person name="Irie R."/>
            <person name="Wakamatsu A."/>
            <person name="Hayashi K."/>
            <person name="Sato H."/>
            <person name="Nagai K."/>
            <person name="Kimura K."/>
            <person name="Makita H."/>
            <person name="Sekine M."/>
            <person name="Obayashi M."/>
            <person name="Nishi T."/>
            <person name="Shibahara T."/>
            <person name="Tanaka T."/>
            <person name="Ishii S."/>
            <person name="Yamamoto J."/>
            <person name="Saito K."/>
            <person name="Kawai Y."/>
            <person name="Isono Y."/>
            <person name="Nakamura Y."/>
            <person name="Nagahari K."/>
            <person name="Murakami K."/>
            <person name="Yasuda T."/>
            <person name="Iwayanagi T."/>
            <person name="Wagatsuma M."/>
            <person name="Shiratori A."/>
            <person name="Sudo H."/>
            <person name="Hosoiri T."/>
            <person name="Kaku Y."/>
            <person name="Kodaira H."/>
            <person name="Kondo H."/>
            <person name="Sugawara M."/>
            <person name="Takahashi M."/>
            <person name="Kanda K."/>
            <person name="Yokoi T."/>
            <person name="Furuya T."/>
            <person name="Kikkawa E."/>
            <person name="Omura Y."/>
            <person name="Abe K."/>
            <person name="Kamihara K."/>
            <person name="Katsuta N."/>
            <person name="Sato K."/>
            <person name="Tanikawa M."/>
            <person name="Yamazaki M."/>
            <person name="Ninomiya K."/>
            <person name="Ishibashi T."/>
            <person name="Yamashita H."/>
            <person name="Murakawa K."/>
            <person name="Fujimori K."/>
            <person name="Tanai H."/>
            <person name="Kimata M."/>
            <person name="Watanabe M."/>
            <person name="Hiraoka S."/>
            <person name="Chiba Y."/>
            <person name="Ishida S."/>
            <person name="Ono Y."/>
            <person name="Takiguchi S."/>
            <person name="Watanabe S."/>
            <person name="Yosida M."/>
            <person name="Hotuta T."/>
            <person name="Kusano J."/>
            <person name="Kanehori K."/>
            <person name="Takahashi-Fujii A."/>
            <person name="Hara H."/>
            <person name="Tanase T.-O."/>
            <person name="Nomura Y."/>
            <person name="Togiya S."/>
            <person name="Komai F."/>
            <person name="Hara R."/>
            <person name="Takeuchi K."/>
            <person name="Arita M."/>
            <person name="Imose N."/>
            <person name="Musashino K."/>
            <person name="Yuuki H."/>
            <person name="Oshima A."/>
            <person name="Sasaki N."/>
            <person name="Aotsuka S."/>
            <person name="Yoshikawa Y."/>
            <person name="Matsunawa H."/>
            <person name="Ichihara T."/>
            <person name="Shiohata N."/>
            <person name="Sano S."/>
            <person name="Moriya S."/>
            <person name="Momiyama H."/>
            <person name="Satoh N."/>
            <person name="Takami S."/>
            <person name="Terashima Y."/>
            <person name="Suzuki O."/>
            <person name="Nakagawa S."/>
            <person name="Senoh A."/>
            <person name="Mizoguchi H."/>
            <person name="Goto Y."/>
            <person name="Shimizu F."/>
            <person name="Wakebe H."/>
            <person name="Hishigaki H."/>
            <person name="Watanabe T."/>
            <person name="Sugiyama A."/>
            <person name="Takemoto M."/>
            <person name="Kawakami B."/>
            <person name="Yamazaki M."/>
            <person name="Watanabe K."/>
            <person name="Kumagai A."/>
            <person name="Itakura S."/>
            <person name="Fukuzumi Y."/>
            <person name="Fujimori Y."/>
            <person name="Komiyama M."/>
            <person name="Tashiro H."/>
            <person name="Tanigami A."/>
            <person name="Fujiwara T."/>
            <person name="Ono T."/>
            <person name="Yamada K."/>
            <person name="Fujii Y."/>
            <person name="Ozaki K."/>
            <person name="Hirao M."/>
            <person name="Ohmori Y."/>
            <person name="Kawabata A."/>
            <person name="Hikiji T."/>
            <person name="Kobatake N."/>
            <person name="Inagaki H."/>
            <person name="Ikema Y."/>
            <person name="Okamoto S."/>
            <person name="Okitani R."/>
            <person name="Kawakami T."/>
            <person name="Noguchi S."/>
            <person name="Itoh T."/>
            <person name="Shigeta K."/>
            <person name="Senba T."/>
            <person name="Matsumura K."/>
            <person name="Nakajima Y."/>
            <person name="Mizuno T."/>
            <person name="Morinaga M."/>
            <person name="Sasaki M."/>
            <person name="Togashi T."/>
            <person name="Oyama M."/>
            <person name="Hata H."/>
            <person name="Watanabe M."/>
            <person name="Komatsu T."/>
            <person name="Mizushima-Sugano J."/>
            <person name="Satoh T."/>
            <person name="Shirai Y."/>
            <person name="Takahashi Y."/>
            <person name="Nakagawa K."/>
            <person name="Okumura K."/>
            <person name="Nagase T."/>
            <person name="Nomura N."/>
            <person name="Kikuchi H."/>
            <person name="Masuho Y."/>
            <person name="Yamashita R."/>
            <person name="Nakai K."/>
            <person name="Yada T."/>
            <person name="Nakamura Y."/>
            <person name="Ohara O."/>
            <person name="Isogai T."/>
            <person name="Sugano S."/>
        </authorList>
    </citation>
    <scope>NUCLEOTIDE SEQUENCE [LARGE SCALE MRNA]</scope>
    <source>
        <tissue>Testis</tissue>
    </source>
</reference>
<reference key="4">
    <citation type="journal article" date="2004" name="Genome Res.">
        <title>The status, quality, and expansion of the NIH full-length cDNA project: the Mammalian Gene Collection (MGC).</title>
        <authorList>
            <consortium name="The MGC Project Team"/>
        </authorList>
    </citation>
    <scope>NUCLEOTIDE SEQUENCE [LARGE SCALE MRNA]</scope>
    <source>
        <tissue>Skin</tissue>
    </source>
</reference>
<reference key="5">
    <citation type="journal article" date="2011" name="Eur. J. Endocrinol.">
        <title>Mutational analysis of the necdin gene in patients with congenital isolated hypogonadotropic hypogonadism.</title>
        <authorList>
            <person name="Beneduzzi D."/>
            <person name="Iyer A.K."/>
            <person name="Trarbach E.B."/>
            <person name="Silveira-Neto A.P."/>
            <person name="Silveira L.G."/>
            <person name="Tusset C."/>
            <person name="Yip K."/>
            <person name="Mendonca B.B."/>
            <person name="Mellon P.L."/>
            <person name="Latronico A.C."/>
        </authorList>
    </citation>
    <scope>VARIANT ALA-318</scope>
</reference>
<feature type="chain" id="PRO_0000156740" description="Necdin">
    <location>
        <begin position="1"/>
        <end position="321"/>
    </location>
</feature>
<feature type="domain" description="MAGE" evidence="2">
    <location>
        <begin position="98"/>
        <end position="297"/>
    </location>
</feature>
<feature type="region of interest" description="Disordered" evidence="3">
    <location>
        <begin position="1"/>
        <end position="96"/>
    </location>
</feature>
<feature type="compositionally biased region" description="Low complexity" evidence="3">
    <location>
        <begin position="20"/>
        <end position="35"/>
    </location>
</feature>
<feature type="sequence variant" id="VAR_065889" description="In dbSNP:rs114077338." evidence="4">
    <original>V</original>
    <variation>A</variation>
    <location>
        <position position="318"/>
    </location>
</feature>